<keyword id="KW-0067">ATP-binding</keyword>
<keyword id="KW-0418">Kinase</keyword>
<keyword id="KW-0441">Lipid A biosynthesis</keyword>
<keyword id="KW-0444">Lipid biosynthesis</keyword>
<keyword id="KW-0443">Lipid metabolism</keyword>
<keyword id="KW-0547">Nucleotide-binding</keyword>
<keyword id="KW-1185">Reference proteome</keyword>
<keyword id="KW-0808">Transferase</keyword>
<evidence type="ECO:0000255" key="1">
    <source>
        <dbReference type="HAMAP-Rule" id="MF_00409"/>
    </source>
</evidence>
<proteinExistence type="inferred from homology"/>
<sequence>MQRWINNIWYGSNPIKWLLVPLSGLFWLISSLRRKKFAGSPSASEALGVPVIIVGNITVGGSGKTPMVIYLIELLRRQGYRPGVISRGYGVKIDGVKLVEAQASAVDVGDEPAMIVARTQVPMAVGPDRLAAVSLLQRHYDIDVIISDDGLQHYKLTRDIELVIIDGARRFGNGYLLPAGPLREGLWRLKTIDWLINNGGKAQDNEVLMQLEPKPLLKVKSSQPGLESLDKALPVVAMAGIGNPARFFDSLSGQGYQLKHTLAFDDHQAFDAQALIALAGDLPLIMTEKDAIKCRDFAQDNWWYLPVNARLNADFDKALLARLAPLVQIKP</sequence>
<dbReference type="EC" id="2.7.1.130" evidence="1"/>
<dbReference type="EMBL" id="CP000302">
    <property type="protein sequence ID" value="ABE55479.1"/>
    <property type="molecule type" value="Genomic_DNA"/>
</dbReference>
<dbReference type="RefSeq" id="WP_011496632.1">
    <property type="nucleotide sequence ID" value="NC_007954.1"/>
</dbReference>
<dbReference type="SMR" id="Q12M47"/>
<dbReference type="STRING" id="318161.Sden_2198"/>
<dbReference type="KEGG" id="sdn:Sden_2198"/>
<dbReference type="eggNOG" id="COG1663">
    <property type="taxonomic scope" value="Bacteria"/>
</dbReference>
<dbReference type="HOGENOM" id="CLU_038816_2_0_6"/>
<dbReference type="OrthoDB" id="9766423at2"/>
<dbReference type="UniPathway" id="UPA00359">
    <property type="reaction ID" value="UER00482"/>
</dbReference>
<dbReference type="Proteomes" id="UP000001982">
    <property type="component" value="Chromosome"/>
</dbReference>
<dbReference type="GO" id="GO:0005886">
    <property type="term" value="C:plasma membrane"/>
    <property type="evidence" value="ECO:0007669"/>
    <property type="project" value="TreeGrafter"/>
</dbReference>
<dbReference type="GO" id="GO:0005524">
    <property type="term" value="F:ATP binding"/>
    <property type="evidence" value="ECO:0007669"/>
    <property type="project" value="UniProtKB-UniRule"/>
</dbReference>
<dbReference type="GO" id="GO:0009029">
    <property type="term" value="F:tetraacyldisaccharide 4'-kinase activity"/>
    <property type="evidence" value="ECO:0007669"/>
    <property type="project" value="UniProtKB-UniRule"/>
</dbReference>
<dbReference type="GO" id="GO:0009245">
    <property type="term" value="P:lipid A biosynthetic process"/>
    <property type="evidence" value="ECO:0007669"/>
    <property type="project" value="UniProtKB-UniRule"/>
</dbReference>
<dbReference type="GO" id="GO:0009244">
    <property type="term" value="P:lipopolysaccharide core region biosynthetic process"/>
    <property type="evidence" value="ECO:0007669"/>
    <property type="project" value="TreeGrafter"/>
</dbReference>
<dbReference type="HAMAP" id="MF_00409">
    <property type="entry name" value="LpxK"/>
    <property type="match status" value="1"/>
</dbReference>
<dbReference type="InterPro" id="IPR003758">
    <property type="entry name" value="LpxK"/>
</dbReference>
<dbReference type="InterPro" id="IPR027417">
    <property type="entry name" value="P-loop_NTPase"/>
</dbReference>
<dbReference type="NCBIfam" id="TIGR00682">
    <property type="entry name" value="lpxK"/>
    <property type="match status" value="1"/>
</dbReference>
<dbReference type="PANTHER" id="PTHR42724">
    <property type="entry name" value="TETRAACYLDISACCHARIDE 4'-KINASE"/>
    <property type="match status" value="1"/>
</dbReference>
<dbReference type="PANTHER" id="PTHR42724:SF1">
    <property type="entry name" value="TETRAACYLDISACCHARIDE 4'-KINASE, MITOCHONDRIAL-RELATED"/>
    <property type="match status" value="1"/>
</dbReference>
<dbReference type="Pfam" id="PF02606">
    <property type="entry name" value="LpxK"/>
    <property type="match status" value="1"/>
</dbReference>
<dbReference type="SUPFAM" id="SSF52540">
    <property type="entry name" value="P-loop containing nucleoside triphosphate hydrolases"/>
    <property type="match status" value="1"/>
</dbReference>
<comment type="function">
    <text evidence="1">Transfers the gamma-phosphate of ATP to the 4'-position of a tetraacyldisaccharide 1-phosphate intermediate (termed DS-1-P) to form tetraacyldisaccharide 1,4'-bis-phosphate (lipid IVA).</text>
</comment>
<comment type="catalytic activity">
    <reaction evidence="1">
        <text>a lipid A disaccharide + ATP = a lipid IVA + ADP + H(+)</text>
        <dbReference type="Rhea" id="RHEA:67840"/>
        <dbReference type="ChEBI" id="CHEBI:15378"/>
        <dbReference type="ChEBI" id="CHEBI:30616"/>
        <dbReference type="ChEBI" id="CHEBI:176343"/>
        <dbReference type="ChEBI" id="CHEBI:176425"/>
        <dbReference type="ChEBI" id="CHEBI:456216"/>
        <dbReference type="EC" id="2.7.1.130"/>
    </reaction>
</comment>
<comment type="pathway">
    <text evidence="1">Glycolipid biosynthesis; lipid IV(A) biosynthesis; lipid IV(A) from (3R)-3-hydroxytetradecanoyl-[acyl-carrier-protein] and UDP-N-acetyl-alpha-D-glucosamine: step 6/6.</text>
</comment>
<comment type="similarity">
    <text evidence="1">Belongs to the LpxK family.</text>
</comment>
<name>LPXK_SHEDO</name>
<gene>
    <name evidence="1" type="primary">lpxK</name>
    <name type="ordered locus">Sden_2198</name>
</gene>
<accession>Q12M47</accession>
<feature type="chain" id="PRO_0000291242" description="Tetraacyldisaccharide 4'-kinase">
    <location>
        <begin position="1"/>
        <end position="331"/>
    </location>
</feature>
<feature type="binding site" evidence="1">
    <location>
        <begin position="58"/>
        <end position="65"/>
    </location>
    <ligand>
        <name>ATP</name>
        <dbReference type="ChEBI" id="CHEBI:30616"/>
    </ligand>
</feature>
<reference key="1">
    <citation type="submission" date="2006-03" db="EMBL/GenBank/DDBJ databases">
        <title>Complete sequence of Shewanella denitrificans OS217.</title>
        <authorList>
            <consortium name="US DOE Joint Genome Institute"/>
            <person name="Copeland A."/>
            <person name="Lucas S."/>
            <person name="Lapidus A."/>
            <person name="Barry K."/>
            <person name="Detter J.C."/>
            <person name="Glavina del Rio T."/>
            <person name="Hammon N."/>
            <person name="Israni S."/>
            <person name="Dalin E."/>
            <person name="Tice H."/>
            <person name="Pitluck S."/>
            <person name="Brettin T."/>
            <person name="Bruce D."/>
            <person name="Han C."/>
            <person name="Tapia R."/>
            <person name="Gilna P."/>
            <person name="Kiss H."/>
            <person name="Schmutz J."/>
            <person name="Larimer F."/>
            <person name="Land M."/>
            <person name="Hauser L."/>
            <person name="Kyrpides N."/>
            <person name="Lykidis A."/>
            <person name="Richardson P."/>
        </authorList>
    </citation>
    <scope>NUCLEOTIDE SEQUENCE [LARGE SCALE GENOMIC DNA]</scope>
    <source>
        <strain>OS217 / ATCC BAA-1090 / DSM 15013</strain>
    </source>
</reference>
<protein>
    <recommendedName>
        <fullName evidence="1">Tetraacyldisaccharide 4'-kinase</fullName>
        <ecNumber evidence="1">2.7.1.130</ecNumber>
    </recommendedName>
    <alternativeName>
        <fullName evidence="1">Lipid A 4'-kinase</fullName>
    </alternativeName>
</protein>
<organism>
    <name type="scientific">Shewanella denitrificans (strain OS217 / ATCC BAA-1090 / DSM 15013)</name>
    <dbReference type="NCBI Taxonomy" id="318161"/>
    <lineage>
        <taxon>Bacteria</taxon>
        <taxon>Pseudomonadati</taxon>
        <taxon>Pseudomonadota</taxon>
        <taxon>Gammaproteobacteria</taxon>
        <taxon>Alteromonadales</taxon>
        <taxon>Shewanellaceae</taxon>
        <taxon>Shewanella</taxon>
    </lineage>
</organism>